<accession>Q11W14</accession>
<proteinExistence type="inferred from homology"/>
<keyword id="KW-1003">Cell membrane</keyword>
<keyword id="KW-0255">Endonuclease</keyword>
<keyword id="KW-0378">Hydrolase</keyword>
<keyword id="KW-0472">Membrane</keyword>
<keyword id="KW-0540">Nuclease</keyword>
<keyword id="KW-1185">Reference proteome</keyword>
<keyword id="KW-0694">RNA-binding</keyword>
<keyword id="KW-0812">Transmembrane</keyword>
<keyword id="KW-1133">Transmembrane helix</keyword>
<dbReference type="EC" id="3.1.-.-" evidence="1"/>
<dbReference type="EMBL" id="CP000383">
    <property type="protein sequence ID" value="ABG58402.1"/>
    <property type="molecule type" value="Genomic_DNA"/>
</dbReference>
<dbReference type="RefSeq" id="WP_011584517.1">
    <property type="nucleotide sequence ID" value="NC_008255.1"/>
</dbReference>
<dbReference type="SMR" id="Q11W14"/>
<dbReference type="STRING" id="269798.CHU_1127"/>
<dbReference type="KEGG" id="chu:CHU_1127"/>
<dbReference type="eggNOG" id="COG1418">
    <property type="taxonomic scope" value="Bacteria"/>
</dbReference>
<dbReference type="HOGENOM" id="CLU_028328_1_0_10"/>
<dbReference type="OrthoDB" id="9803205at2"/>
<dbReference type="Proteomes" id="UP000001822">
    <property type="component" value="Chromosome"/>
</dbReference>
<dbReference type="GO" id="GO:0005886">
    <property type="term" value="C:plasma membrane"/>
    <property type="evidence" value="ECO:0007669"/>
    <property type="project" value="UniProtKB-SubCell"/>
</dbReference>
<dbReference type="GO" id="GO:0003723">
    <property type="term" value="F:RNA binding"/>
    <property type="evidence" value="ECO:0007669"/>
    <property type="project" value="UniProtKB-UniRule"/>
</dbReference>
<dbReference type="GO" id="GO:0004521">
    <property type="term" value="F:RNA endonuclease activity"/>
    <property type="evidence" value="ECO:0007669"/>
    <property type="project" value="UniProtKB-UniRule"/>
</dbReference>
<dbReference type="GO" id="GO:0006402">
    <property type="term" value="P:mRNA catabolic process"/>
    <property type="evidence" value="ECO:0007669"/>
    <property type="project" value="UniProtKB-UniRule"/>
</dbReference>
<dbReference type="CDD" id="cd00077">
    <property type="entry name" value="HDc"/>
    <property type="match status" value="1"/>
</dbReference>
<dbReference type="CDD" id="cd22431">
    <property type="entry name" value="KH-I_RNaseY"/>
    <property type="match status" value="1"/>
</dbReference>
<dbReference type="FunFam" id="1.10.3210.10:FF:000013">
    <property type="entry name" value="Ribonuclease Y"/>
    <property type="match status" value="1"/>
</dbReference>
<dbReference type="Gene3D" id="1.10.3210.10">
    <property type="entry name" value="Hypothetical protein af1432"/>
    <property type="match status" value="1"/>
</dbReference>
<dbReference type="HAMAP" id="MF_00335">
    <property type="entry name" value="RNase_Y"/>
    <property type="match status" value="1"/>
</dbReference>
<dbReference type="InterPro" id="IPR003607">
    <property type="entry name" value="HD/PDEase_dom"/>
</dbReference>
<dbReference type="InterPro" id="IPR006674">
    <property type="entry name" value="HD_domain"/>
</dbReference>
<dbReference type="InterPro" id="IPR006675">
    <property type="entry name" value="HDIG_dom"/>
</dbReference>
<dbReference type="InterPro" id="IPR004087">
    <property type="entry name" value="KH_dom"/>
</dbReference>
<dbReference type="InterPro" id="IPR004088">
    <property type="entry name" value="KH_dom_type_1"/>
</dbReference>
<dbReference type="InterPro" id="IPR036612">
    <property type="entry name" value="KH_dom_type_1_sf"/>
</dbReference>
<dbReference type="InterPro" id="IPR017705">
    <property type="entry name" value="Ribonuclease_Y"/>
</dbReference>
<dbReference type="InterPro" id="IPR022711">
    <property type="entry name" value="RNase_Y_N"/>
</dbReference>
<dbReference type="NCBIfam" id="TIGR00277">
    <property type="entry name" value="HDIG"/>
    <property type="match status" value="1"/>
</dbReference>
<dbReference type="NCBIfam" id="TIGR03319">
    <property type="entry name" value="RNase_Y"/>
    <property type="match status" value="1"/>
</dbReference>
<dbReference type="PANTHER" id="PTHR12826">
    <property type="entry name" value="RIBONUCLEASE Y"/>
    <property type="match status" value="1"/>
</dbReference>
<dbReference type="PANTHER" id="PTHR12826:SF15">
    <property type="entry name" value="RIBONUCLEASE Y"/>
    <property type="match status" value="1"/>
</dbReference>
<dbReference type="Pfam" id="PF01966">
    <property type="entry name" value="HD"/>
    <property type="match status" value="1"/>
</dbReference>
<dbReference type="Pfam" id="PF00013">
    <property type="entry name" value="KH_1"/>
    <property type="match status" value="1"/>
</dbReference>
<dbReference type="Pfam" id="PF12072">
    <property type="entry name" value="RNase_Y_N"/>
    <property type="match status" value="1"/>
</dbReference>
<dbReference type="SMART" id="SM00471">
    <property type="entry name" value="HDc"/>
    <property type="match status" value="1"/>
</dbReference>
<dbReference type="SMART" id="SM00322">
    <property type="entry name" value="KH"/>
    <property type="match status" value="1"/>
</dbReference>
<dbReference type="SUPFAM" id="SSF54791">
    <property type="entry name" value="Eukaryotic type KH-domain (KH-domain type I)"/>
    <property type="match status" value="1"/>
</dbReference>
<dbReference type="SUPFAM" id="SSF109604">
    <property type="entry name" value="HD-domain/PDEase-like"/>
    <property type="match status" value="1"/>
</dbReference>
<dbReference type="PROSITE" id="PS51831">
    <property type="entry name" value="HD"/>
    <property type="match status" value="1"/>
</dbReference>
<dbReference type="PROSITE" id="PS50084">
    <property type="entry name" value="KH_TYPE_1"/>
    <property type="match status" value="1"/>
</dbReference>
<reference key="1">
    <citation type="journal article" date="2007" name="Appl. Environ. Microbiol.">
        <title>Genome sequence of the cellulolytic gliding bacterium Cytophaga hutchinsonii.</title>
        <authorList>
            <person name="Xie G."/>
            <person name="Bruce D.C."/>
            <person name="Challacombe J.F."/>
            <person name="Chertkov O."/>
            <person name="Detter J.C."/>
            <person name="Gilna P."/>
            <person name="Han C.S."/>
            <person name="Lucas S."/>
            <person name="Misra M."/>
            <person name="Myers G.L."/>
            <person name="Richardson P."/>
            <person name="Tapia R."/>
            <person name="Thayer N."/>
            <person name="Thompson L.S."/>
            <person name="Brettin T.S."/>
            <person name="Henrissat B."/>
            <person name="Wilson D.B."/>
            <person name="McBride M.J."/>
        </authorList>
    </citation>
    <scope>NUCLEOTIDE SEQUENCE [LARGE SCALE GENOMIC DNA]</scope>
    <source>
        <strain>ATCC 33406 / DSM 1761 / JCM 20678 / CIP 103989 / IAM 12607 / NBRC 15051 / NCIMB 9469 / D465</strain>
    </source>
</reference>
<protein>
    <recommendedName>
        <fullName evidence="1">Ribonuclease Y</fullName>
        <shortName evidence="1">RNase Y</shortName>
        <ecNumber evidence="1">3.1.-.-</ecNumber>
    </recommendedName>
</protein>
<feature type="chain" id="PRO_0000344858" description="Ribonuclease Y">
    <location>
        <begin position="1"/>
        <end position="522"/>
    </location>
</feature>
<feature type="transmembrane region" description="Helical" evidence="1">
    <location>
        <begin position="3"/>
        <end position="23"/>
    </location>
</feature>
<feature type="domain" description="KH" evidence="1">
    <location>
        <begin position="212"/>
        <end position="272"/>
    </location>
</feature>
<feature type="domain" description="HD" evidence="2">
    <location>
        <begin position="338"/>
        <end position="431"/>
    </location>
</feature>
<sequence length="522" mass="58671">MSELIMYILATAVVSIGVGIVAGKAIFQKDFSKQETEAKEKANLIIKEAELKAEATKKDKQLEAKEHFLKLKTEFEEDSNKKKNLIIQNEQKIKQREQTISKQMETNTRREAELDSLRENLSSQLEILNKRKEELEKLRHSQIEKLEKIAGLTGEEAKAQLMDTIKEEARTEASSYIKRITDEAKMTATKDAKKIVIETLQRTATENAVENCVSIFNIESDDIKGKIIGREGRNIRALEAATGVEIIVDDTPEAIIISGFDPVRREVARLSLHRLVQDGRIHPARIEEVVTKTAKHLDEEIIEIGERTAIDLGIHGLHPELIRLVGRMRFRSSYGQNLLQHSREVAKLCATMASELGLNAKVAKRAGLLHDIGKVYPDEPELPHAILGMELAKKYKESAEICNAIGAHHDEIEMTGLISPIVQVCDAISGARPGARREVMEQYIKRLKDLEQLALSFDGVLKCYAIQAGRELRIMVDAENVSDDKAGILSFDIAQKIEKEMQYPGQIKVTVIREMRAVNFAK</sequence>
<evidence type="ECO:0000255" key="1">
    <source>
        <dbReference type="HAMAP-Rule" id="MF_00335"/>
    </source>
</evidence>
<evidence type="ECO:0000255" key="2">
    <source>
        <dbReference type="PROSITE-ProRule" id="PRU01175"/>
    </source>
</evidence>
<comment type="function">
    <text evidence="1">Endoribonuclease that initiates mRNA decay.</text>
</comment>
<comment type="subcellular location">
    <subcellularLocation>
        <location evidence="1">Cell membrane</location>
        <topology evidence="1">Single-pass membrane protein</topology>
    </subcellularLocation>
</comment>
<comment type="similarity">
    <text evidence="1">Belongs to the RNase Y family.</text>
</comment>
<organism>
    <name type="scientific">Cytophaga hutchinsonii (strain ATCC 33406 / DSM 1761 / CIP 103989 / NBRC 15051 / NCIMB 9469 / D465)</name>
    <dbReference type="NCBI Taxonomy" id="269798"/>
    <lineage>
        <taxon>Bacteria</taxon>
        <taxon>Pseudomonadati</taxon>
        <taxon>Bacteroidota</taxon>
        <taxon>Cytophagia</taxon>
        <taxon>Cytophagales</taxon>
        <taxon>Cytophagaceae</taxon>
        <taxon>Cytophaga</taxon>
    </lineage>
</organism>
<name>RNY_CYTH3</name>
<gene>
    <name evidence="1" type="primary">rny</name>
    <name type="ordered locus">CHU_1127</name>
</gene>